<reference key="1">
    <citation type="journal article" date="2001" name="Proc. Natl. Acad. Sci. U.S.A.">
        <title>Cloning and functional analysis of two gibberellin 3 beta - hydroxylase genes that are differently expressed during the growth of rice.</title>
        <authorList>
            <person name="Itoh H."/>
            <person name="Ueguchi-Tanaka M."/>
            <person name="Sentoku N."/>
            <person name="Kitano H."/>
            <person name="Matsuoka M."/>
            <person name="Kobayashi M."/>
        </authorList>
    </citation>
    <scope>NUCLEOTIDE SEQUENCE [MRNA]</scope>
    <scope>FUNCTION</scope>
    <scope>CATALYTIC ACTIVITY</scope>
    <scope>COFACTOR</scope>
    <scope>TISSUE SPECIFICITY</scope>
    <scope>INDUCTION</scope>
    <scope>DEVELOPMENTAL STAGE</scope>
    <source>
        <strain>cv. Hoshinoyume</strain>
        <strain>cv. Nipponbare</strain>
        <tissue>Shoot</tissue>
    </source>
</reference>
<reference key="2">
    <citation type="journal article" date="2002" name="Nature">
        <title>The genome sequence and structure of rice chromosome 1.</title>
        <authorList>
            <person name="Sasaki T."/>
            <person name="Matsumoto T."/>
            <person name="Yamamoto K."/>
            <person name="Sakata K."/>
            <person name="Baba T."/>
            <person name="Katayose Y."/>
            <person name="Wu J."/>
            <person name="Niimura Y."/>
            <person name="Cheng Z."/>
            <person name="Nagamura Y."/>
            <person name="Antonio B.A."/>
            <person name="Kanamori H."/>
            <person name="Hosokawa S."/>
            <person name="Masukawa M."/>
            <person name="Arikawa K."/>
            <person name="Chiden Y."/>
            <person name="Hayashi M."/>
            <person name="Okamoto M."/>
            <person name="Ando T."/>
            <person name="Aoki H."/>
            <person name="Arita K."/>
            <person name="Hamada M."/>
            <person name="Harada C."/>
            <person name="Hijishita S."/>
            <person name="Honda M."/>
            <person name="Ichikawa Y."/>
            <person name="Idonuma A."/>
            <person name="Iijima M."/>
            <person name="Ikeda M."/>
            <person name="Ikeno M."/>
            <person name="Ito S."/>
            <person name="Ito T."/>
            <person name="Ito Y."/>
            <person name="Ito Y."/>
            <person name="Iwabuchi A."/>
            <person name="Kamiya K."/>
            <person name="Karasawa W."/>
            <person name="Katagiri S."/>
            <person name="Kikuta A."/>
            <person name="Kobayashi N."/>
            <person name="Kono I."/>
            <person name="Machita K."/>
            <person name="Maehara T."/>
            <person name="Mizuno H."/>
            <person name="Mizubayashi T."/>
            <person name="Mukai Y."/>
            <person name="Nagasaki H."/>
            <person name="Nakashima M."/>
            <person name="Nakama Y."/>
            <person name="Nakamichi Y."/>
            <person name="Nakamura M."/>
            <person name="Namiki N."/>
            <person name="Negishi M."/>
            <person name="Ohta I."/>
            <person name="Ono N."/>
            <person name="Saji S."/>
            <person name="Sakai K."/>
            <person name="Shibata M."/>
            <person name="Shimokawa T."/>
            <person name="Shomura A."/>
            <person name="Song J."/>
            <person name="Takazaki Y."/>
            <person name="Terasawa K."/>
            <person name="Tsuji K."/>
            <person name="Waki K."/>
            <person name="Yamagata H."/>
            <person name="Yamane H."/>
            <person name="Yoshiki S."/>
            <person name="Yoshihara R."/>
            <person name="Yukawa K."/>
            <person name="Zhong H."/>
            <person name="Iwama H."/>
            <person name="Endo T."/>
            <person name="Ito H."/>
            <person name="Hahn J.H."/>
            <person name="Kim H.-I."/>
            <person name="Eun M.-Y."/>
            <person name="Yano M."/>
            <person name="Jiang J."/>
            <person name="Gojobori T."/>
        </authorList>
    </citation>
    <scope>NUCLEOTIDE SEQUENCE [LARGE SCALE GENOMIC DNA]</scope>
    <source>
        <strain>cv. Nipponbare</strain>
    </source>
</reference>
<reference key="3">
    <citation type="journal article" date="2005" name="Nature">
        <title>The map-based sequence of the rice genome.</title>
        <authorList>
            <consortium name="International rice genome sequencing project (IRGSP)"/>
        </authorList>
    </citation>
    <scope>NUCLEOTIDE SEQUENCE [LARGE SCALE GENOMIC DNA]</scope>
    <source>
        <strain>cv. Nipponbare</strain>
    </source>
</reference>
<reference key="4">
    <citation type="journal article" date="2008" name="Nucleic Acids Res.">
        <title>The rice annotation project database (RAP-DB): 2008 update.</title>
        <authorList>
            <consortium name="The rice annotation project (RAP)"/>
        </authorList>
    </citation>
    <scope>GENOME REANNOTATION</scope>
    <source>
        <strain>cv. Nipponbare</strain>
    </source>
</reference>
<reference key="5">
    <citation type="journal article" date="2013" name="Rice">
        <title>Improvement of the Oryza sativa Nipponbare reference genome using next generation sequence and optical map data.</title>
        <authorList>
            <person name="Kawahara Y."/>
            <person name="de la Bastide M."/>
            <person name="Hamilton J.P."/>
            <person name="Kanamori H."/>
            <person name="McCombie W.R."/>
            <person name="Ouyang S."/>
            <person name="Schwartz D.C."/>
            <person name="Tanaka T."/>
            <person name="Wu J."/>
            <person name="Zhou S."/>
            <person name="Childs K.L."/>
            <person name="Davidson R.M."/>
            <person name="Lin H."/>
            <person name="Quesada-Ocampo L."/>
            <person name="Vaillancourt B."/>
            <person name="Sakai H."/>
            <person name="Lee S.S."/>
            <person name="Kim J."/>
            <person name="Numa H."/>
            <person name="Itoh T."/>
            <person name="Buell C.R."/>
            <person name="Matsumoto T."/>
        </authorList>
    </citation>
    <scope>GENOME REANNOTATION</scope>
    <source>
        <strain>cv. Nipponbare</strain>
    </source>
</reference>
<reference key="6">
    <citation type="journal article" date="2005" name="PLoS Biol.">
        <title>The genomes of Oryza sativa: a history of duplications.</title>
        <authorList>
            <person name="Yu J."/>
            <person name="Wang J."/>
            <person name="Lin W."/>
            <person name="Li S."/>
            <person name="Li H."/>
            <person name="Zhou J."/>
            <person name="Ni P."/>
            <person name="Dong W."/>
            <person name="Hu S."/>
            <person name="Zeng C."/>
            <person name="Zhang J."/>
            <person name="Zhang Y."/>
            <person name="Li R."/>
            <person name="Xu Z."/>
            <person name="Li S."/>
            <person name="Li X."/>
            <person name="Zheng H."/>
            <person name="Cong L."/>
            <person name="Lin L."/>
            <person name="Yin J."/>
            <person name="Geng J."/>
            <person name="Li G."/>
            <person name="Shi J."/>
            <person name="Liu J."/>
            <person name="Lv H."/>
            <person name="Li J."/>
            <person name="Wang J."/>
            <person name="Deng Y."/>
            <person name="Ran L."/>
            <person name="Shi X."/>
            <person name="Wang X."/>
            <person name="Wu Q."/>
            <person name="Li C."/>
            <person name="Ren X."/>
            <person name="Wang J."/>
            <person name="Wang X."/>
            <person name="Li D."/>
            <person name="Liu D."/>
            <person name="Zhang X."/>
            <person name="Ji Z."/>
            <person name="Zhao W."/>
            <person name="Sun Y."/>
            <person name="Zhang Z."/>
            <person name="Bao J."/>
            <person name="Han Y."/>
            <person name="Dong L."/>
            <person name="Ji J."/>
            <person name="Chen P."/>
            <person name="Wu S."/>
            <person name="Liu J."/>
            <person name="Xiao Y."/>
            <person name="Bu D."/>
            <person name="Tan J."/>
            <person name="Yang L."/>
            <person name="Ye C."/>
            <person name="Zhang J."/>
            <person name="Xu J."/>
            <person name="Zhou Y."/>
            <person name="Yu Y."/>
            <person name="Zhang B."/>
            <person name="Zhuang S."/>
            <person name="Wei H."/>
            <person name="Liu B."/>
            <person name="Lei M."/>
            <person name="Yu H."/>
            <person name="Li Y."/>
            <person name="Xu H."/>
            <person name="Wei S."/>
            <person name="He X."/>
            <person name="Fang L."/>
            <person name="Zhang Z."/>
            <person name="Zhang Y."/>
            <person name="Huang X."/>
            <person name="Su Z."/>
            <person name="Tong W."/>
            <person name="Li J."/>
            <person name="Tong Z."/>
            <person name="Li S."/>
            <person name="Ye J."/>
            <person name="Wang L."/>
            <person name="Fang L."/>
            <person name="Lei T."/>
            <person name="Chen C.-S."/>
            <person name="Chen H.-C."/>
            <person name="Xu Z."/>
            <person name="Li H."/>
            <person name="Huang H."/>
            <person name="Zhang F."/>
            <person name="Xu H."/>
            <person name="Li N."/>
            <person name="Zhao C."/>
            <person name="Li S."/>
            <person name="Dong L."/>
            <person name="Huang Y."/>
            <person name="Li L."/>
            <person name="Xi Y."/>
            <person name="Qi Q."/>
            <person name="Li W."/>
            <person name="Zhang B."/>
            <person name="Hu W."/>
            <person name="Zhang Y."/>
            <person name="Tian X."/>
            <person name="Jiao Y."/>
            <person name="Liang X."/>
            <person name="Jin J."/>
            <person name="Gao L."/>
            <person name="Zheng W."/>
            <person name="Hao B."/>
            <person name="Liu S.-M."/>
            <person name="Wang W."/>
            <person name="Yuan L."/>
            <person name="Cao M."/>
            <person name="McDermott J."/>
            <person name="Samudrala R."/>
            <person name="Wang J."/>
            <person name="Wong G.K.-S."/>
            <person name="Yang H."/>
        </authorList>
    </citation>
    <scope>NUCLEOTIDE SEQUENCE [LARGE SCALE GENOMIC DNA]</scope>
    <source>
        <strain>cv. Nipponbare</strain>
    </source>
</reference>
<reference key="7">
    <citation type="journal article" date="2002" name="Breed. Sci.">
        <title>Modification of rice plant height by suppressing the height-controlling gene, D18, in rice.</title>
        <authorList>
            <person name="Itoh H."/>
            <person name="Ueguchi-Tanaka M."/>
            <person name="Sakamoto T."/>
            <person name="Kayano T."/>
            <person name="Tanaka H."/>
            <person name="Ashikari M."/>
            <person name="Matsuoka M."/>
        </authorList>
    </citation>
    <scope>FUNCTION</scope>
</reference>
<keyword id="KW-0002">3D-structure</keyword>
<keyword id="KW-0223">Dioxygenase</keyword>
<keyword id="KW-0408">Iron</keyword>
<keyword id="KW-0479">Metal-binding</keyword>
<keyword id="KW-0560">Oxidoreductase</keyword>
<keyword id="KW-1185">Reference proteome</keyword>
<gene>
    <name evidence="5" type="primary">GA3OX2</name>
    <name evidence="5" type="synonym">D18</name>
    <name evidence="8" type="ordered locus">Os01g0177400</name>
    <name evidence="6" type="ordered locus">LOC_Os01g08220</name>
    <name evidence="9" type="ORF">OsJ_00594</name>
    <name evidence="7" type="ORF">P0013F10.29</name>
</gene>
<evidence type="ECO:0000250" key="1">
    <source>
        <dbReference type="UniProtKB" id="D4N500"/>
    </source>
</evidence>
<evidence type="ECO:0000255" key="2">
    <source>
        <dbReference type="PROSITE-ProRule" id="PRU00805"/>
    </source>
</evidence>
<evidence type="ECO:0000269" key="3">
    <source>
    </source>
</evidence>
<evidence type="ECO:0000269" key="4">
    <source ref="7"/>
</evidence>
<evidence type="ECO:0000303" key="5">
    <source>
    </source>
</evidence>
<evidence type="ECO:0000305" key="6"/>
<evidence type="ECO:0000312" key="7">
    <source>
        <dbReference type="EMBL" id="BAB17075.1"/>
    </source>
</evidence>
<evidence type="ECO:0000312" key="8">
    <source>
        <dbReference type="EMBL" id="BAS70691.1"/>
    </source>
</evidence>
<evidence type="ECO:0000312" key="9">
    <source>
        <dbReference type="EMBL" id="EAZ10757.1"/>
    </source>
</evidence>
<evidence type="ECO:0007829" key="10">
    <source>
        <dbReference type="PDB" id="7EKD"/>
    </source>
</evidence>
<feature type="chain" id="PRO_0000445031" description="Gibberellin 3-beta-dioxygenase 2">
    <location>
        <begin position="1"/>
        <end position="373"/>
    </location>
</feature>
<feature type="domain" description="Fe2OG dioxygenase" evidence="2">
    <location>
        <begin position="203"/>
        <end position="304"/>
    </location>
</feature>
<feature type="binding site" evidence="1">
    <location>
        <position position="212"/>
    </location>
    <ligand>
        <name>2-oxoglutarate</name>
        <dbReference type="ChEBI" id="CHEBI:16810"/>
    </ligand>
</feature>
<feature type="binding site" evidence="2">
    <location>
        <position position="227"/>
    </location>
    <ligand>
        <name>Fe cation</name>
        <dbReference type="ChEBI" id="CHEBI:24875"/>
    </ligand>
</feature>
<feature type="binding site" evidence="2">
    <location>
        <position position="229"/>
    </location>
    <ligand>
        <name>Fe cation</name>
        <dbReference type="ChEBI" id="CHEBI:24875"/>
    </ligand>
</feature>
<feature type="binding site" evidence="2">
    <location>
        <position position="285"/>
    </location>
    <ligand>
        <name>Fe cation</name>
        <dbReference type="ChEBI" id="CHEBI:24875"/>
    </ligand>
</feature>
<feature type="binding site" evidence="2">
    <location>
        <position position="295"/>
    </location>
    <ligand>
        <name>2-oxoglutarate</name>
        <dbReference type="ChEBI" id="CHEBI:16810"/>
    </ligand>
</feature>
<feature type="binding site" evidence="1">
    <location>
        <position position="297"/>
    </location>
    <ligand>
        <name>2-oxoglutarate</name>
        <dbReference type="ChEBI" id="CHEBI:16810"/>
    </ligand>
</feature>
<feature type="turn" evidence="10">
    <location>
        <begin position="15"/>
        <end position="17"/>
    </location>
</feature>
<feature type="helix" evidence="10">
    <location>
        <begin position="23"/>
        <end position="25"/>
    </location>
</feature>
<feature type="turn" evidence="10">
    <location>
        <begin position="28"/>
        <end position="31"/>
    </location>
</feature>
<feature type="strand" evidence="10">
    <location>
        <begin position="35"/>
        <end position="37"/>
    </location>
</feature>
<feature type="helix" evidence="10">
    <location>
        <begin position="43"/>
        <end position="45"/>
    </location>
</feature>
<feature type="strand" evidence="10">
    <location>
        <begin position="49"/>
        <end position="51"/>
    </location>
</feature>
<feature type="helix" evidence="10">
    <location>
        <begin position="57"/>
        <end position="67"/>
    </location>
</feature>
<feature type="strand" evidence="10">
    <location>
        <begin position="69"/>
        <end position="74"/>
    </location>
</feature>
<feature type="helix" evidence="10">
    <location>
        <begin position="80"/>
        <end position="95"/>
    </location>
</feature>
<feature type="helix" evidence="10">
    <location>
        <begin position="98"/>
        <end position="101"/>
    </location>
</feature>
<feature type="helix" evidence="10">
    <location>
        <begin position="102"/>
        <end position="104"/>
    </location>
</feature>
<feature type="strand" evidence="10">
    <location>
        <begin position="111"/>
        <end position="115"/>
    </location>
</feature>
<feature type="helix" evidence="10">
    <location>
        <begin position="118"/>
        <end position="122"/>
    </location>
</feature>
<feature type="strand" evidence="10">
    <location>
        <begin position="130"/>
        <end position="134"/>
    </location>
</feature>
<feature type="helix" evidence="10">
    <location>
        <begin position="136"/>
        <end position="138"/>
    </location>
</feature>
<feature type="helix" evidence="10">
    <location>
        <begin position="139"/>
        <end position="142"/>
    </location>
</feature>
<feature type="helix" evidence="10">
    <location>
        <begin position="143"/>
        <end position="145"/>
    </location>
</feature>
<feature type="helix" evidence="10">
    <location>
        <begin position="152"/>
        <end position="182"/>
    </location>
</feature>
<feature type="helix" evidence="10">
    <location>
        <begin position="187"/>
        <end position="197"/>
    </location>
</feature>
<feature type="helix" evidence="10">
    <location>
        <begin position="199"/>
        <end position="202"/>
    </location>
</feature>
<feature type="strand" evidence="10">
    <location>
        <begin position="204"/>
        <end position="212"/>
    </location>
</feature>
<feature type="turn" evidence="10">
    <location>
        <begin position="218"/>
        <end position="220"/>
    </location>
</feature>
<feature type="strand" evidence="10">
    <location>
        <begin position="223"/>
        <end position="227"/>
    </location>
</feature>
<feature type="strand" evidence="10">
    <location>
        <begin position="230"/>
        <end position="238"/>
    </location>
</feature>
<feature type="strand" evidence="10">
    <location>
        <begin position="244"/>
        <end position="248"/>
    </location>
</feature>
<feature type="turn" evidence="10">
    <location>
        <begin position="249"/>
        <end position="252"/>
    </location>
</feature>
<feature type="strand" evidence="10">
    <location>
        <begin position="253"/>
        <end position="256"/>
    </location>
</feature>
<feature type="strand" evidence="10">
    <location>
        <begin position="264"/>
        <end position="268"/>
    </location>
</feature>
<feature type="helix" evidence="10">
    <location>
        <begin position="270"/>
        <end position="275"/>
    </location>
</feature>
<feature type="turn" evidence="10">
    <location>
        <begin position="276"/>
        <end position="278"/>
    </location>
</feature>
<feature type="strand" evidence="10">
    <location>
        <begin position="285"/>
        <end position="287"/>
    </location>
</feature>
<feature type="strand" evidence="10">
    <location>
        <begin position="295"/>
        <end position="303"/>
    </location>
</feature>
<feature type="helix" evidence="10">
    <location>
        <begin position="314"/>
        <end position="316"/>
    </location>
</feature>
<feature type="helix" evidence="10">
    <location>
        <begin position="330"/>
        <end position="343"/>
    </location>
</feature>
<feature type="helix" evidence="10">
    <location>
        <begin position="347"/>
        <end position="351"/>
    </location>
</feature>
<comment type="function">
    <text evidence="3 4">Catalyzes the 3-beta-hydroxylation of the inactive gibberellin precursors, leading to the formation of bioactive gibberellins. In vitro, converts the precursors GA20, GA5, GA44 and GA9 to the corresponding 3-beta-hydroxylated active products GA1, GA3, GA38 and GA4, respectively. Involved in the production of bioactive GA for vegetative growth and development (PubMed:11438692). Controls the elongation of the vegetative shoot and plant height by the regulation of active gibberellin levels (Ref.7).</text>
</comment>
<comment type="catalytic activity">
    <reaction evidence="3">
        <text>gibberellin A20 + 2-oxoglutarate + O2 = gibberellin A1 + succinate + CO2</text>
        <dbReference type="Rhea" id="RHEA:10104"/>
        <dbReference type="ChEBI" id="CHEBI:15379"/>
        <dbReference type="ChEBI" id="CHEBI:16526"/>
        <dbReference type="ChEBI" id="CHEBI:16810"/>
        <dbReference type="ChEBI" id="CHEBI:30031"/>
        <dbReference type="ChEBI" id="CHEBI:58524"/>
        <dbReference type="ChEBI" id="CHEBI:58526"/>
        <dbReference type="EC" id="1.14.11.15"/>
    </reaction>
</comment>
<comment type="cofactor">
    <cofactor evidence="3">
        <name>L-ascorbate</name>
        <dbReference type="ChEBI" id="CHEBI:38290"/>
    </cofactor>
</comment>
<comment type="cofactor">
    <cofactor evidence="2">
        <name>Fe(2+)</name>
        <dbReference type="ChEBI" id="CHEBI:29033"/>
    </cofactor>
    <text evidence="2">Binds 1 Fe(2+) ion per subunit.</text>
</comment>
<comment type="pathway">
    <text evidence="6">Plant hormone biosynthesis; gibberellin biosynthesis.</text>
</comment>
<comment type="tissue specificity">
    <text evidence="3">Highly expressed in elongating leaves. Expressed in unopened flowers. Expressed at low levels in leaf blades, shoots, rachis, stems and young panicles.</text>
</comment>
<comment type="developmental stage">
    <text evidence="3">During anther development, expressed in the tapetum at the early-stage and middle-stage of pollen differentiation.</text>
</comment>
<comment type="induction">
    <text evidence="3">Induced by uniconazole. Down-regulated by gibberellin (GA3).</text>
</comment>
<comment type="miscellaneous">
    <text evidence="4">Plants silencing G3OX2 exhibit reduced plant height.</text>
</comment>
<comment type="similarity">
    <text evidence="6">Belongs to the iron/ascorbate-dependent oxidoreductase family.</text>
</comment>
<comment type="sequence caution" evidence="6">
    <conflict type="erroneous gene model prediction">
        <sequence resource="EMBL-CDS" id="BAF04100"/>
    </conflict>
</comment>
<comment type="sequence caution" evidence="6">
    <conflict type="erroneous gene model prediction">
        <sequence resource="EMBL-CDS" id="BAS70691"/>
    </conflict>
</comment>
<sequence>MPTPSHLKNPLCFDFRAARRVPETHAWPGLDDHPVVDGGGGGGEDAVPVVDVGAGDAAARVARAAEQWGAFLLVGHGVPAALLSRVEERVARVFSLPASEKMRAVRGPGEPCGYGSPPISSFFSKLMWSEGYTFSPSSLRSELRRLWPKSGDDYLLFCDVMEEFHKEMRRLADELLRLFLRALGLTGEEVAGVEAERRIGERMTATVHLNWYPRCPEPRRALGLIAHTDSGFFTFVLQSLVPGLQLFRRGPDRWVAVPAVAGAFVVNVGDLFHILTNGRFHSVYHRAVVNRDRDRVSLGYFLGPPPDAEVAPLPEAVPAGRSPAYRAVTWPEYMAVRKKAFATGGSALKMVSTDAAAAADEHDDVAAAADVHA</sequence>
<dbReference type="EC" id="1.14.11.15" evidence="3"/>
<dbReference type="EMBL" id="AB056519">
    <property type="protein sequence ID" value="BAB62155.1"/>
    <property type="molecule type" value="mRNA"/>
</dbReference>
<dbReference type="EMBL" id="AB269821">
    <property type="protein sequence ID" value="BAF03047.1"/>
    <property type="molecule type" value="mRNA"/>
</dbReference>
<dbReference type="EMBL" id="AP002523">
    <property type="protein sequence ID" value="BAB17075.1"/>
    <property type="molecule type" value="Genomic_DNA"/>
</dbReference>
<dbReference type="EMBL" id="AP008207">
    <property type="protein sequence ID" value="BAF04100.1"/>
    <property type="status" value="ALT_SEQ"/>
    <property type="molecule type" value="Genomic_DNA"/>
</dbReference>
<dbReference type="EMBL" id="AP014957">
    <property type="protein sequence ID" value="BAS70691.1"/>
    <property type="status" value="ALT_SEQ"/>
    <property type="molecule type" value="Genomic_DNA"/>
</dbReference>
<dbReference type="EMBL" id="CM000138">
    <property type="protein sequence ID" value="EAZ10757.1"/>
    <property type="molecule type" value="Genomic_DNA"/>
</dbReference>
<dbReference type="PDB" id="7EKD">
    <property type="method" value="X-ray"/>
    <property type="resolution" value="1.90 A"/>
    <property type="chains" value="A=1-373"/>
</dbReference>
<dbReference type="PDBsum" id="7EKD"/>
<dbReference type="SMR" id="Q9FU53"/>
<dbReference type="FunCoup" id="Q9FU53">
    <property type="interactions" value="32"/>
</dbReference>
<dbReference type="STRING" id="39947.Q9FU53"/>
<dbReference type="PaxDb" id="39947-Q9FU53"/>
<dbReference type="GeneID" id="4323864"/>
<dbReference type="KEGG" id="dosa:Os01g0177400"/>
<dbReference type="KEGG" id="osa:4323864"/>
<dbReference type="eggNOG" id="KOG0143">
    <property type="taxonomic scope" value="Eukaryota"/>
</dbReference>
<dbReference type="HOGENOM" id="CLU_010119_16_3_1"/>
<dbReference type="InParanoid" id="Q9FU53"/>
<dbReference type="OrthoDB" id="288590at2759"/>
<dbReference type="UniPathway" id="UPA00390"/>
<dbReference type="Proteomes" id="UP000000763">
    <property type="component" value="Chromosome 1"/>
</dbReference>
<dbReference type="Proteomes" id="UP000007752">
    <property type="component" value="Chromosome 1"/>
</dbReference>
<dbReference type="Proteomes" id="UP000059680">
    <property type="component" value="Chromosome 1"/>
</dbReference>
<dbReference type="GO" id="GO:0016707">
    <property type="term" value="F:gibberellin 3-beta-dioxygenase activity"/>
    <property type="evidence" value="ECO:0000314"/>
    <property type="project" value="UniProtKB"/>
</dbReference>
<dbReference type="GO" id="GO:0046872">
    <property type="term" value="F:metal ion binding"/>
    <property type="evidence" value="ECO:0007669"/>
    <property type="project" value="UniProtKB-KW"/>
</dbReference>
<dbReference type="GO" id="GO:0009686">
    <property type="term" value="P:gibberellin biosynthetic process"/>
    <property type="evidence" value="ECO:0000314"/>
    <property type="project" value="UniProtKB"/>
</dbReference>
<dbReference type="GO" id="GO:0009685">
    <property type="term" value="P:gibberellin metabolic process"/>
    <property type="evidence" value="ECO:0000305"/>
    <property type="project" value="Gramene"/>
</dbReference>
<dbReference type="GO" id="GO:0009416">
    <property type="term" value="P:response to light stimulus"/>
    <property type="evidence" value="ECO:0000318"/>
    <property type="project" value="GO_Central"/>
</dbReference>
<dbReference type="FunFam" id="2.60.120.330:FF:000013">
    <property type="entry name" value="Gibberellin 3-beta-dioxygenase 1"/>
    <property type="match status" value="1"/>
</dbReference>
<dbReference type="Gene3D" id="2.60.120.330">
    <property type="entry name" value="B-lactam Antibiotic, Isopenicillin N Synthase, Chain"/>
    <property type="match status" value="1"/>
</dbReference>
<dbReference type="InterPro" id="IPR026992">
    <property type="entry name" value="DIOX_N"/>
</dbReference>
<dbReference type="InterPro" id="IPR044861">
    <property type="entry name" value="IPNS-like_FE2OG_OXY"/>
</dbReference>
<dbReference type="InterPro" id="IPR027443">
    <property type="entry name" value="IPNS-like_sf"/>
</dbReference>
<dbReference type="InterPro" id="IPR050231">
    <property type="entry name" value="Iron_ascorbate_oxido_reductase"/>
</dbReference>
<dbReference type="InterPro" id="IPR005123">
    <property type="entry name" value="Oxoglu/Fe-dep_dioxygenase_dom"/>
</dbReference>
<dbReference type="PANTHER" id="PTHR47990">
    <property type="entry name" value="2-OXOGLUTARATE (2OG) AND FE(II)-DEPENDENT OXYGENASE SUPERFAMILY PROTEIN-RELATED"/>
    <property type="match status" value="1"/>
</dbReference>
<dbReference type="Pfam" id="PF03171">
    <property type="entry name" value="2OG-FeII_Oxy"/>
    <property type="match status" value="1"/>
</dbReference>
<dbReference type="Pfam" id="PF14226">
    <property type="entry name" value="DIOX_N"/>
    <property type="match status" value="1"/>
</dbReference>
<dbReference type="SUPFAM" id="SSF51197">
    <property type="entry name" value="Clavaminate synthase-like"/>
    <property type="match status" value="1"/>
</dbReference>
<dbReference type="PROSITE" id="PS51471">
    <property type="entry name" value="FE2OG_OXY"/>
    <property type="match status" value="1"/>
</dbReference>
<protein>
    <recommendedName>
        <fullName evidence="6">Gibberellin 3-beta-dioxygenase 2</fullName>
        <ecNumber evidence="3">1.14.11.15</ecNumber>
    </recommendedName>
    <alternativeName>
        <fullName evidence="6">GA 3-oxidase 2</fullName>
        <shortName evidence="5">OsGA3ox2</shortName>
    </alternativeName>
    <alternativeName>
        <fullName evidence="5">Gibberellin 3 beta-hydroxylase 2</fullName>
    </alternativeName>
    <alternativeName>
        <fullName evidence="5">Protein DWARF18</fullName>
    </alternativeName>
</protein>
<organism>
    <name type="scientific">Oryza sativa subsp. japonica</name>
    <name type="common">Rice</name>
    <dbReference type="NCBI Taxonomy" id="39947"/>
    <lineage>
        <taxon>Eukaryota</taxon>
        <taxon>Viridiplantae</taxon>
        <taxon>Streptophyta</taxon>
        <taxon>Embryophyta</taxon>
        <taxon>Tracheophyta</taxon>
        <taxon>Spermatophyta</taxon>
        <taxon>Magnoliopsida</taxon>
        <taxon>Liliopsida</taxon>
        <taxon>Poales</taxon>
        <taxon>Poaceae</taxon>
        <taxon>BOP clade</taxon>
        <taxon>Oryzoideae</taxon>
        <taxon>Oryzeae</taxon>
        <taxon>Oryzinae</taxon>
        <taxon>Oryza</taxon>
        <taxon>Oryza sativa</taxon>
    </lineage>
</organism>
<proteinExistence type="evidence at protein level"/>
<accession>Q9FU53</accession>
<accession>Q0JQ78</accession>
<name>G3OX2_ORYSJ</name>